<feature type="chain" id="PRO_0000192422" description="Shikimate kinase">
    <location>
        <begin position="1"/>
        <end position="174"/>
    </location>
</feature>
<feature type="binding site" evidence="1">
    <location>
        <begin position="14"/>
        <end position="19"/>
    </location>
    <ligand>
        <name>ATP</name>
        <dbReference type="ChEBI" id="CHEBI:30616"/>
    </ligand>
</feature>
<feature type="binding site" evidence="1">
    <location>
        <position position="18"/>
    </location>
    <ligand>
        <name>Mg(2+)</name>
        <dbReference type="ChEBI" id="CHEBI:18420"/>
    </ligand>
</feature>
<feature type="binding site" evidence="1">
    <location>
        <position position="36"/>
    </location>
    <ligand>
        <name>substrate</name>
    </ligand>
</feature>
<feature type="binding site" evidence="1">
    <location>
        <position position="60"/>
    </location>
    <ligand>
        <name>substrate</name>
    </ligand>
</feature>
<feature type="binding site" evidence="1">
    <location>
        <position position="82"/>
    </location>
    <ligand>
        <name>substrate</name>
    </ligand>
</feature>
<feature type="binding site" evidence="1">
    <location>
        <position position="120"/>
    </location>
    <ligand>
        <name>ATP</name>
        <dbReference type="ChEBI" id="CHEBI:30616"/>
    </ligand>
</feature>
<feature type="binding site" evidence="1">
    <location>
        <position position="139"/>
    </location>
    <ligand>
        <name>substrate</name>
    </ligand>
</feature>
<feature type="binding site" evidence="1">
    <location>
        <position position="156"/>
    </location>
    <ligand>
        <name>ATP</name>
        <dbReference type="ChEBI" id="CHEBI:30616"/>
    </ligand>
</feature>
<evidence type="ECO:0000255" key="1">
    <source>
        <dbReference type="HAMAP-Rule" id="MF_00109"/>
    </source>
</evidence>
<proteinExistence type="inferred from homology"/>
<organism>
    <name type="scientific">Vibrio cholerae serotype O1 (strain ATCC 39315 / El Tor Inaba N16961)</name>
    <dbReference type="NCBI Taxonomy" id="243277"/>
    <lineage>
        <taxon>Bacteria</taxon>
        <taxon>Pseudomonadati</taxon>
        <taxon>Pseudomonadota</taxon>
        <taxon>Gammaproteobacteria</taxon>
        <taxon>Vibrionales</taxon>
        <taxon>Vibrionaceae</taxon>
        <taxon>Vibrio</taxon>
    </lineage>
</organism>
<comment type="function">
    <text evidence="1">Catalyzes the specific phosphorylation of the 3-hydroxyl group of shikimic acid using ATP as a cosubstrate.</text>
</comment>
<comment type="catalytic activity">
    <reaction evidence="1">
        <text>shikimate + ATP = 3-phosphoshikimate + ADP + H(+)</text>
        <dbReference type="Rhea" id="RHEA:13121"/>
        <dbReference type="ChEBI" id="CHEBI:15378"/>
        <dbReference type="ChEBI" id="CHEBI:30616"/>
        <dbReference type="ChEBI" id="CHEBI:36208"/>
        <dbReference type="ChEBI" id="CHEBI:145989"/>
        <dbReference type="ChEBI" id="CHEBI:456216"/>
        <dbReference type="EC" id="2.7.1.71"/>
    </reaction>
</comment>
<comment type="cofactor">
    <cofactor evidence="1">
        <name>Mg(2+)</name>
        <dbReference type="ChEBI" id="CHEBI:18420"/>
    </cofactor>
    <text evidence="1">Binds 1 Mg(2+) ion per subunit.</text>
</comment>
<comment type="pathway">
    <text evidence="1">Metabolic intermediate biosynthesis; chorismate biosynthesis; chorismate from D-erythrose 4-phosphate and phosphoenolpyruvate: step 5/7.</text>
</comment>
<comment type="subunit">
    <text evidence="1">Monomer.</text>
</comment>
<comment type="subcellular location">
    <subcellularLocation>
        <location evidence="1">Cytoplasm</location>
    </subcellularLocation>
</comment>
<comment type="similarity">
    <text evidence="1">Belongs to the shikimate kinase family.</text>
</comment>
<keyword id="KW-0028">Amino-acid biosynthesis</keyword>
<keyword id="KW-0057">Aromatic amino acid biosynthesis</keyword>
<keyword id="KW-0067">ATP-binding</keyword>
<keyword id="KW-0963">Cytoplasm</keyword>
<keyword id="KW-0418">Kinase</keyword>
<keyword id="KW-0460">Magnesium</keyword>
<keyword id="KW-0479">Metal-binding</keyword>
<keyword id="KW-0547">Nucleotide-binding</keyword>
<keyword id="KW-1185">Reference proteome</keyword>
<keyword id="KW-0808">Transferase</keyword>
<accession>Q9KNV1</accession>
<sequence>MAEKRNIFLVGPMGAGKSTIGRHLAQQLHMEFIDSDTVIEERTGADIAWVFDVEGEEGFRKREEAVINDLTEQQGIVLATGGGSVISKENRNRLSARGIVVYLETTIEKQLARTNRDKKRPLLQTDCPREVLEQLAEDRNPLYEEIADITVRTDDQSAKVVANQIVKMLEEHIM</sequence>
<reference key="1">
    <citation type="journal article" date="2000" name="Nature">
        <title>DNA sequence of both chromosomes of the cholera pathogen Vibrio cholerae.</title>
        <authorList>
            <person name="Heidelberg J.F."/>
            <person name="Eisen J.A."/>
            <person name="Nelson W.C."/>
            <person name="Clayton R.A."/>
            <person name="Gwinn M.L."/>
            <person name="Dodson R.J."/>
            <person name="Haft D.H."/>
            <person name="Hickey E.K."/>
            <person name="Peterson J.D."/>
            <person name="Umayam L.A."/>
            <person name="Gill S.R."/>
            <person name="Nelson K.E."/>
            <person name="Read T.D."/>
            <person name="Tettelin H."/>
            <person name="Richardson D.L."/>
            <person name="Ermolaeva M.D."/>
            <person name="Vamathevan J.J."/>
            <person name="Bass S."/>
            <person name="Qin H."/>
            <person name="Dragoi I."/>
            <person name="Sellers P."/>
            <person name="McDonald L.A."/>
            <person name="Utterback T.R."/>
            <person name="Fleischmann R.D."/>
            <person name="Nierman W.C."/>
            <person name="White O."/>
            <person name="Salzberg S.L."/>
            <person name="Smith H.O."/>
            <person name="Colwell R.R."/>
            <person name="Mekalanos J.J."/>
            <person name="Venter J.C."/>
            <person name="Fraser C.M."/>
        </authorList>
    </citation>
    <scope>NUCLEOTIDE SEQUENCE [LARGE SCALE GENOMIC DNA]</scope>
    <source>
        <strain>ATCC 39315 / El Tor Inaba N16961</strain>
    </source>
</reference>
<protein>
    <recommendedName>
        <fullName evidence="1">Shikimate kinase</fullName>
        <shortName evidence="1">SK</shortName>
        <ecNumber evidence="1">2.7.1.71</ecNumber>
    </recommendedName>
</protein>
<dbReference type="EC" id="2.7.1.71" evidence="1"/>
<dbReference type="EMBL" id="AE003852">
    <property type="protein sequence ID" value="AAF95770.1"/>
    <property type="molecule type" value="Genomic_DNA"/>
</dbReference>
<dbReference type="PIR" id="C82053">
    <property type="entry name" value="C82053"/>
</dbReference>
<dbReference type="RefSeq" id="NP_232257.1">
    <property type="nucleotide sequence ID" value="NC_002505.1"/>
</dbReference>
<dbReference type="RefSeq" id="WP_000818616.1">
    <property type="nucleotide sequence ID" value="NZ_LT906614.1"/>
</dbReference>
<dbReference type="SMR" id="Q9KNV1"/>
<dbReference type="STRING" id="243277.VC_2629"/>
<dbReference type="DNASU" id="2615646"/>
<dbReference type="EnsemblBacteria" id="AAF95770">
    <property type="protein sequence ID" value="AAF95770"/>
    <property type="gene ID" value="VC_2629"/>
</dbReference>
<dbReference type="GeneID" id="88785188"/>
<dbReference type="KEGG" id="vch:VC_2629"/>
<dbReference type="PATRIC" id="fig|243277.26.peg.2507"/>
<dbReference type="eggNOG" id="COG0703">
    <property type="taxonomic scope" value="Bacteria"/>
</dbReference>
<dbReference type="HOGENOM" id="CLU_057607_2_2_6"/>
<dbReference type="UniPathway" id="UPA00053">
    <property type="reaction ID" value="UER00088"/>
</dbReference>
<dbReference type="Proteomes" id="UP000000584">
    <property type="component" value="Chromosome 1"/>
</dbReference>
<dbReference type="GO" id="GO:0005829">
    <property type="term" value="C:cytosol"/>
    <property type="evidence" value="ECO:0000318"/>
    <property type="project" value="GO_Central"/>
</dbReference>
<dbReference type="GO" id="GO:0005524">
    <property type="term" value="F:ATP binding"/>
    <property type="evidence" value="ECO:0007669"/>
    <property type="project" value="UniProtKB-UniRule"/>
</dbReference>
<dbReference type="GO" id="GO:0000287">
    <property type="term" value="F:magnesium ion binding"/>
    <property type="evidence" value="ECO:0007669"/>
    <property type="project" value="UniProtKB-UniRule"/>
</dbReference>
<dbReference type="GO" id="GO:0004765">
    <property type="term" value="F:shikimate kinase activity"/>
    <property type="evidence" value="ECO:0000318"/>
    <property type="project" value="GO_Central"/>
</dbReference>
<dbReference type="GO" id="GO:0008652">
    <property type="term" value="P:amino acid biosynthetic process"/>
    <property type="evidence" value="ECO:0007669"/>
    <property type="project" value="UniProtKB-KW"/>
</dbReference>
<dbReference type="GO" id="GO:0009073">
    <property type="term" value="P:aromatic amino acid family biosynthetic process"/>
    <property type="evidence" value="ECO:0007669"/>
    <property type="project" value="UniProtKB-KW"/>
</dbReference>
<dbReference type="GO" id="GO:0009423">
    <property type="term" value="P:chorismate biosynthetic process"/>
    <property type="evidence" value="ECO:0007669"/>
    <property type="project" value="UniProtKB-UniRule"/>
</dbReference>
<dbReference type="CDD" id="cd00464">
    <property type="entry name" value="SK"/>
    <property type="match status" value="1"/>
</dbReference>
<dbReference type="FunFam" id="3.40.50.300:FF:000099">
    <property type="entry name" value="Shikimate kinase 1"/>
    <property type="match status" value="1"/>
</dbReference>
<dbReference type="Gene3D" id="3.40.50.300">
    <property type="entry name" value="P-loop containing nucleotide triphosphate hydrolases"/>
    <property type="match status" value="1"/>
</dbReference>
<dbReference type="HAMAP" id="MF_00109">
    <property type="entry name" value="Shikimate_kinase"/>
    <property type="match status" value="1"/>
</dbReference>
<dbReference type="InterPro" id="IPR027417">
    <property type="entry name" value="P-loop_NTPase"/>
</dbReference>
<dbReference type="InterPro" id="IPR031322">
    <property type="entry name" value="Shikimate/glucono_kinase"/>
</dbReference>
<dbReference type="InterPro" id="IPR000623">
    <property type="entry name" value="Shikimate_kinase/TSH1"/>
</dbReference>
<dbReference type="InterPro" id="IPR023000">
    <property type="entry name" value="Shikimate_kinase_CS"/>
</dbReference>
<dbReference type="NCBIfam" id="NF003456">
    <property type="entry name" value="PRK05057.1"/>
    <property type="match status" value="1"/>
</dbReference>
<dbReference type="PANTHER" id="PTHR21087">
    <property type="entry name" value="SHIKIMATE KINASE"/>
    <property type="match status" value="1"/>
</dbReference>
<dbReference type="PANTHER" id="PTHR21087:SF16">
    <property type="entry name" value="SHIKIMATE KINASE 1, CHLOROPLASTIC"/>
    <property type="match status" value="1"/>
</dbReference>
<dbReference type="Pfam" id="PF01202">
    <property type="entry name" value="SKI"/>
    <property type="match status" value="1"/>
</dbReference>
<dbReference type="PRINTS" id="PR01100">
    <property type="entry name" value="SHIKIMTKNASE"/>
</dbReference>
<dbReference type="SUPFAM" id="SSF52540">
    <property type="entry name" value="P-loop containing nucleoside triphosphate hydrolases"/>
    <property type="match status" value="1"/>
</dbReference>
<dbReference type="PROSITE" id="PS01128">
    <property type="entry name" value="SHIKIMATE_KINASE"/>
    <property type="match status" value="1"/>
</dbReference>
<gene>
    <name evidence="1" type="primary">aroK</name>
    <name type="ordered locus">VC_2629</name>
</gene>
<name>AROK_VIBCH</name>